<proteinExistence type="inferred from homology"/>
<name>EFTS_SHEDO</name>
<keyword id="KW-0963">Cytoplasm</keyword>
<keyword id="KW-0251">Elongation factor</keyword>
<keyword id="KW-0648">Protein biosynthesis</keyword>
<keyword id="KW-1185">Reference proteome</keyword>
<reference key="1">
    <citation type="submission" date="2006-03" db="EMBL/GenBank/DDBJ databases">
        <title>Complete sequence of Shewanella denitrificans OS217.</title>
        <authorList>
            <consortium name="US DOE Joint Genome Institute"/>
            <person name="Copeland A."/>
            <person name="Lucas S."/>
            <person name="Lapidus A."/>
            <person name="Barry K."/>
            <person name="Detter J.C."/>
            <person name="Glavina del Rio T."/>
            <person name="Hammon N."/>
            <person name="Israni S."/>
            <person name="Dalin E."/>
            <person name="Tice H."/>
            <person name="Pitluck S."/>
            <person name="Brettin T."/>
            <person name="Bruce D."/>
            <person name="Han C."/>
            <person name="Tapia R."/>
            <person name="Gilna P."/>
            <person name="Kiss H."/>
            <person name="Schmutz J."/>
            <person name="Larimer F."/>
            <person name="Land M."/>
            <person name="Hauser L."/>
            <person name="Kyrpides N."/>
            <person name="Lykidis A."/>
            <person name="Richardson P."/>
        </authorList>
    </citation>
    <scope>NUCLEOTIDE SEQUENCE [LARGE SCALE GENOMIC DNA]</scope>
    <source>
        <strain>OS217 / ATCC BAA-1090 / DSM 15013</strain>
    </source>
</reference>
<gene>
    <name evidence="1" type="primary">tsf</name>
    <name type="ordered locus">Sden_1555</name>
</gene>
<evidence type="ECO:0000255" key="1">
    <source>
        <dbReference type="HAMAP-Rule" id="MF_00050"/>
    </source>
</evidence>
<accession>Q12NY6</accession>
<protein>
    <recommendedName>
        <fullName evidence="1">Elongation factor Ts</fullName>
        <shortName evidence="1">EF-Ts</shortName>
    </recommendedName>
</protein>
<comment type="function">
    <text evidence="1">Associates with the EF-Tu.GDP complex and induces the exchange of GDP to GTP. It remains bound to the aminoacyl-tRNA.EF-Tu.GTP complex up to the GTP hydrolysis stage on the ribosome.</text>
</comment>
<comment type="subcellular location">
    <subcellularLocation>
        <location evidence="1">Cytoplasm</location>
    </subcellularLocation>
</comment>
<comment type="similarity">
    <text evidence="1">Belongs to the EF-Ts family.</text>
</comment>
<feature type="chain" id="PRO_1000006175" description="Elongation factor Ts">
    <location>
        <begin position="1"/>
        <end position="283"/>
    </location>
</feature>
<feature type="region of interest" description="Involved in Mg(2+) ion dislocation from EF-Tu" evidence="1">
    <location>
        <begin position="79"/>
        <end position="82"/>
    </location>
</feature>
<dbReference type="EMBL" id="CP000302">
    <property type="protein sequence ID" value="ABE54840.1"/>
    <property type="molecule type" value="Genomic_DNA"/>
</dbReference>
<dbReference type="RefSeq" id="WP_011495998.1">
    <property type="nucleotide sequence ID" value="NC_007954.1"/>
</dbReference>
<dbReference type="SMR" id="Q12NY6"/>
<dbReference type="STRING" id="318161.Sden_1555"/>
<dbReference type="KEGG" id="sdn:Sden_1555"/>
<dbReference type="eggNOG" id="COG0264">
    <property type="taxonomic scope" value="Bacteria"/>
</dbReference>
<dbReference type="HOGENOM" id="CLU_047155_0_2_6"/>
<dbReference type="OrthoDB" id="9808348at2"/>
<dbReference type="Proteomes" id="UP000001982">
    <property type="component" value="Chromosome"/>
</dbReference>
<dbReference type="GO" id="GO:0005737">
    <property type="term" value="C:cytoplasm"/>
    <property type="evidence" value="ECO:0007669"/>
    <property type="project" value="UniProtKB-SubCell"/>
</dbReference>
<dbReference type="GO" id="GO:0003746">
    <property type="term" value="F:translation elongation factor activity"/>
    <property type="evidence" value="ECO:0007669"/>
    <property type="project" value="UniProtKB-UniRule"/>
</dbReference>
<dbReference type="CDD" id="cd14275">
    <property type="entry name" value="UBA_EF-Ts"/>
    <property type="match status" value="1"/>
</dbReference>
<dbReference type="FunFam" id="1.10.286.20:FF:000001">
    <property type="entry name" value="Elongation factor Ts"/>
    <property type="match status" value="1"/>
</dbReference>
<dbReference type="FunFam" id="1.10.8.10:FF:000001">
    <property type="entry name" value="Elongation factor Ts"/>
    <property type="match status" value="1"/>
</dbReference>
<dbReference type="FunFam" id="3.30.479.20:FF:000001">
    <property type="entry name" value="Elongation factor Ts"/>
    <property type="match status" value="1"/>
</dbReference>
<dbReference type="Gene3D" id="1.10.286.20">
    <property type="match status" value="1"/>
</dbReference>
<dbReference type="Gene3D" id="1.10.8.10">
    <property type="entry name" value="DNA helicase RuvA subunit, C-terminal domain"/>
    <property type="match status" value="1"/>
</dbReference>
<dbReference type="Gene3D" id="3.30.479.20">
    <property type="entry name" value="Elongation factor Ts, dimerisation domain"/>
    <property type="match status" value="2"/>
</dbReference>
<dbReference type="HAMAP" id="MF_00050">
    <property type="entry name" value="EF_Ts"/>
    <property type="match status" value="1"/>
</dbReference>
<dbReference type="InterPro" id="IPR036402">
    <property type="entry name" value="EF-Ts_dimer_sf"/>
</dbReference>
<dbReference type="InterPro" id="IPR001816">
    <property type="entry name" value="Transl_elong_EFTs/EF1B"/>
</dbReference>
<dbReference type="InterPro" id="IPR014039">
    <property type="entry name" value="Transl_elong_EFTs/EF1B_dimer"/>
</dbReference>
<dbReference type="InterPro" id="IPR018101">
    <property type="entry name" value="Transl_elong_Ts_CS"/>
</dbReference>
<dbReference type="InterPro" id="IPR009060">
    <property type="entry name" value="UBA-like_sf"/>
</dbReference>
<dbReference type="NCBIfam" id="TIGR00116">
    <property type="entry name" value="tsf"/>
    <property type="match status" value="1"/>
</dbReference>
<dbReference type="PANTHER" id="PTHR11741">
    <property type="entry name" value="ELONGATION FACTOR TS"/>
    <property type="match status" value="1"/>
</dbReference>
<dbReference type="PANTHER" id="PTHR11741:SF0">
    <property type="entry name" value="ELONGATION FACTOR TS, MITOCHONDRIAL"/>
    <property type="match status" value="1"/>
</dbReference>
<dbReference type="Pfam" id="PF00889">
    <property type="entry name" value="EF_TS"/>
    <property type="match status" value="1"/>
</dbReference>
<dbReference type="SUPFAM" id="SSF54713">
    <property type="entry name" value="Elongation factor Ts (EF-Ts), dimerisation domain"/>
    <property type="match status" value="2"/>
</dbReference>
<dbReference type="SUPFAM" id="SSF46934">
    <property type="entry name" value="UBA-like"/>
    <property type="match status" value="1"/>
</dbReference>
<dbReference type="PROSITE" id="PS01126">
    <property type="entry name" value="EF_TS_1"/>
    <property type="match status" value="1"/>
</dbReference>
<dbReference type="PROSITE" id="PS01127">
    <property type="entry name" value="EF_TS_2"/>
    <property type="match status" value="1"/>
</dbReference>
<sequence length="283" mass="30448">MAITAAQVKELRDRTGAGMMDCKNALTETNGDIELAIDNMRKSGAAKAAKKAGNIAADGTILIKNGEGFAALLEVNCQTDFVAKDSNFLAFANAVLDVAAASKVTIEELKAQFEETRVALVTKIGENINVRRVEYIDGANLASYRHGERIGVVVAGEADEETLKHIAMHVAASKPEFVNPEDVPAELVEREQALQIEIAMNEGKPAEIAEKMVVGRMKKFTGEISLTGQAFIMEPKKTVGEILKEKKASVSNFIRLEVGEGIEKKEEDFAAEVAAQIAATKKA</sequence>
<organism>
    <name type="scientific">Shewanella denitrificans (strain OS217 / ATCC BAA-1090 / DSM 15013)</name>
    <dbReference type="NCBI Taxonomy" id="318161"/>
    <lineage>
        <taxon>Bacteria</taxon>
        <taxon>Pseudomonadati</taxon>
        <taxon>Pseudomonadota</taxon>
        <taxon>Gammaproteobacteria</taxon>
        <taxon>Alteromonadales</taxon>
        <taxon>Shewanellaceae</taxon>
        <taxon>Shewanella</taxon>
    </lineage>
</organism>